<gene>
    <name evidence="1" type="primary">bpt</name>
    <name type="ordered locus">Nwi_1911</name>
</gene>
<reference key="1">
    <citation type="journal article" date="2006" name="Appl. Environ. Microbiol.">
        <title>Genome sequence of the chemolithoautotrophic nitrite-oxidizing bacterium Nitrobacter winogradskyi Nb-255.</title>
        <authorList>
            <person name="Starkenburg S.R."/>
            <person name="Chain P.S.G."/>
            <person name="Sayavedra-Soto L.A."/>
            <person name="Hauser L."/>
            <person name="Land M.L."/>
            <person name="Larimer F.W."/>
            <person name="Malfatti S.A."/>
            <person name="Klotz M.G."/>
            <person name="Bottomley P.J."/>
            <person name="Arp D.J."/>
            <person name="Hickey W.J."/>
        </authorList>
    </citation>
    <scope>NUCLEOTIDE SEQUENCE [LARGE SCALE GENOMIC DNA]</scope>
    <source>
        <strain>ATCC 25391 / DSM 10237 / CIP 104748 / NCIMB 11846 / Nb-255</strain>
    </source>
</reference>
<keyword id="KW-0012">Acyltransferase</keyword>
<keyword id="KW-0963">Cytoplasm</keyword>
<keyword id="KW-1185">Reference proteome</keyword>
<keyword id="KW-0808">Transferase</keyword>
<accession>Q3SRC0</accession>
<feature type="chain" id="PRO_0000263195" description="Aspartate/glutamate leucyltransferase">
    <location>
        <begin position="1"/>
        <end position="257"/>
    </location>
</feature>
<dbReference type="EC" id="2.3.2.29" evidence="1"/>
<dbReference type="EMBL" id="CP000115">
    <property type="protein sequence ID" value="ABA05171.1"/>
    <property type="molecule type" value="Genomic_DNA"/>
</dbReference>
<dbReference type="RefSeq" id="WP_011315167.1">
    <property type="nucleotide sequence ID" value="NC_007406.1"/>
</dbReference>
<dbReference type="SMR" id="Q3SRC0"/>
<dbReference type="STRING" id="323098.Nwi_1911"/>
<dbReference type="KEGG" id="nwi:Nwi_1911"/>
<dbReference type="eggNOG" id="COG2935">
    <property type="taxonomic scope" value="Bacteria"/>
</dbReference>
<dbReference type="HOGENOM" id="CLU_077607_1_0_5"/>
<dbReference type="OrthoDB" id="9782022at2"/>
<dbReference type="Proteomes" id="UP000002531">
    <property type="component" value="Chromosome"/>
</dbReference>
<dbReference type="GO" id="GO:0005737">
    <property type="term" value="C:cytoplasm"/>
    <property type="evidence" value="ECO:0007669"/>
    <property type="project" value="UniProtKB-SubCell"/>
</dbReference>
<dbReference type="GO" id="GO:0004057">
    <property type="term" value="F:arginyl-tRNA--protein transferase activity"/>
    <property type="evidence" value="ECO:0007669"/>
    <property type="project" value="InterPro"/>
</dbReference>
<dbReference type="GO" id="GO:0008914">
    <property type="term" value="F:leucyl-tRNA--protein transferase activity"/>
    <property type="evidence" value="ECO:0007669"/>
    <property type="project" value="UniProtKB-UniRule"/>
</dbReference>
<dbReference type="GO" id="GO:0071596">
    <property type="term" value="P:ubiquitin-dependent protein catabolic process via the N-end rule pathway"/>
    <property type="evidence" value="ECO:0007669"/>
    <property type="project" value="InterPro"/>
</dbReference>
<dbReference type="HAMAP" id="MF_00689">
    <property type="entry name" value="Bpt"/>
    <property type="match status" value="1"/>
</dbReference>
<dbReference type="InterPro" id="IPR016181">
    <property type="entry name" value="Acyl_CoA_acyltransferase"/>
</dbReference>
<dbReference type="InterPro" id="IPR017138">
    <property type="entry name" value="Asp_Glu_LeuTrfase"/>
</dbReference>
<dbReference type="InterPro" id="IPR030700">
    <property type="entry name" value="N-end_Aminoacyl_Trfase"/>
</dbReference>
<dbReference type="InterPro" id="IPR007472">
    <property type="entry name" value="N-end_Aminoacyl_Trfase_C"/>
</dbReference>
<dbReference type="InterPro" id="IPR007471">
    <property type="entry name" value="N-end_Aminoacyl_Trfase_N"/>
</dbReference>
<dbReference type="NCBIfam" id="NF002342">
    <property type="entry name" value="PRK01305.1-3"/>
    <property type="match status" value="1"/>
</dbReference>
<dbReference type="NCBIfam" id="NF002343">
    <property type="entry name" value="PRK01305.1-4"/>
    <property type="match status" value="1"/>
</dbReference>
<dbReference type="NCBIfam" id="NF002346">
    <property type="entry name" value="PRK01305.2-3"/>
    <property type="match status" value="1"/>
</dbReference>
<dbReference type="PANTHER" id="PTHR21367">
    <property type="entry name" value="ARGININE-TRNA-PROTEIN TRANSFERASE 1"/>
    <property type="match status" value="1"/>
</dbReference>
<dbReference type="PANTHER" id="PTHR21367:SF1">
    <property type="entry name" value="ARGINYL-TRNA--PROTEIN TRANSFERASE 1"/>
    <property type="match status" value="1"/>
</dbReference>
<dbReference type="Pfam" id="PF04377">
    <property type="entry name" value="ATE_C"/>
    <property type="match status" value="1"/>
</dbReference>
<dbReference type="Pfam" id="PF04376">
    <property type="entry name" value="ATE_N"/>
    <property type="match status" value="1"/>
</dbReference>
<dbReference type="PIRSF" id="PIRSF037208">
    <property type="entry name" value="ATE_pro_prd"/>
    <property type="match status" value="1"/>
</dbReference>
<dbReference type="SUPFAM" id="SSF55729">
    <property type="entry name" value="Acyl-CoA N-acyltransferases (Nat)"/>
    <property type="match status" value="1"/>
</dbReference>
<proteinExistence type="inferred from homology"/>
<protein>
    <recommendedName>
        <fullName evidence="1">Aspartate/glutamate leucyltransferase</fullName>
        <ecNumber evidence="1">2.3.2.29</ecNumber>
    </recommendedName>
</protein>
<organism>
    <name type="scientific">Nitrobacter winogradskyi (strain ATCC 25391 / DSM 10237 / CIP 104748 / NCIMB 11846 / Nb-255)</name>
    <dbReference type="NCBI Taxonomy" id="323098"/>
    <lineage>
        <taxon>Bacteria</taxon>
        <taxon>Pseudomonadati</taxon>
        <taxon>Pseudomonadota</taxon>
        <taxon>Alphaproteobacteria</taxon>
        <taxon>Hyphomicrobiales</taxon>
        <taxon>Nitrobacteraceae</taxon>
        <taxon>Nitrobacter</taxon>
    </lineage>
</organism>
<sequence>MTQHSRDTPQFYLTAPSPCPYLPDRSERKVFTHLVGEKAGELNDLLTHGGFRRSQSIAYRPACDQCRACVSVRVIADEFQLSRGARRVLARNADITGSLRAATPTSEQYSIFRAYLDQRHRHGGMADMTVLDYAMMVEDSHVETRIIEYRRRGADRVDNKRGDLVGVALTDVLSDGLSMVYSFFDPSEQNRSFGTFMILDHISRARQLGLPYVYLGYWIEGSRKMDYKGRFLPQQRLAPTGWLRVDADGETKHETTE</sequence>
<comment type="function">
    <text evidence="1">Functions in the N-end rule pathway of protein degradation where it conjugates Leu from its aminoacyl-tRNA to the N-termini of proteins containing an N-terminal aspartate or glutamate.</text>
</comment>
<comment type="catalytic activity">
    <reaction evidence="1">
        <text>N-terminal L-glutamyl-[protein] + L-leucyl-tRNA(Leu) = N-terminal L-leucyl-L-glutamyl-[protein] + tRNA(Leu) + H(+)</text>
        <dbReference type="Rhea" id="RHEA:50412"/>
        <dbReference type="Rhea" id="RHEA-COMP:9613"/>
        <dbReference type="Rhea" id="RHEA-COMP:9622"/>
        <dbReference type="Rhea" id="RHEA-COMP:12664"/>
        <dbReference type="Rhea" id="RHEA-COMP:12668"/>
        <dbReference type="ChEBI" id="CHEBI:15378"/>
        <dbReference type="ChEBI" id="CHEBI:64721"/>
        <dbReference type="ChEBI" id="CHEBI:78442"/>
        <dbReference type="ChEBI" id="CHEBI:78494"/>
        <dbReference type="ChEBI" id="CHEBI:133041"/>
        <dbReference type="EC" id="2.3.2.29"/>
    </reaction>
</comment>
<comment type="catalytic activity">
    <reaction evidence="1">
        <text>N-terminal L-aspartyl-[protein] + L-leucyl-tRNA(Leu) = N-terminal L-leucyl-L-aspartyl-[protein] + tRNA(Leu) + H(+)</text>
        <dbReference type="Rhea" id="RHEA:50420"/>
        <dbReference type="Rhea" id="RHEA-COMP:9613"/>
        <dbReference type="Rhea" id="RHEA-COMP:9622"/>
        <dbReference type="Rhea" id="RHEA-COMP:12669"/>
        <dbReference type="Rhea" id="RHEA-COMP:12674"/>
        <dbReference type="ChEBI" id="CHEBI:15378"/>
        <dbReference type="ChEBI" id="CHEBI:64720"/>
        <dbReference type="ChEBI" id="CHEBI:78442"/>
        <dbReference type="ChEBI" id="CHEBI:78494"/>
        <dbReference type="ChEBI" id="CHEBI:133042"/>
        <dbReference type="EC" id="2.3.2.29"/>
    </reaction>
</comment>
<comment type="subcellular location">
    <subcellularLocation>
        <location evidence="1">Cytoplasm</location>
    </subcellularLocation>
</comment>
<comment type="similarity">
    <text evidence="1">Belongs to the R-transferase family. Bpt subfamily.</text>
</comment>
<evidence type="ECO:0000255" key="1">
    <source>
        <dbReference type="HAMAP-Rule" id="MF_00689"/>
    </source>
</evidence>
<name>BPT_NITWN</name>